<keyword id="KW-0963">Cytoplasm</keyword>
<keyword id="KW-0413">Isomerase</keyword>
<keyword id="KW-0627">Porphyrin biosynthesis</keyword>
<keyword id="KW-0663">Pyridoxal phosphate</keyword>
<protein>
    <recommendedName>
        <fullName evidence="1">Glutamate-1-semialdehyde 2,1-aminomutase</fullName>
        <shortName evidence="1">GSA</shortName>
        <ecNumber evidence="1">5.4.3.8</ecNumber>
    </recommendedName>
    <alternativeName>
        <fullName evidence="1">Glutamate-1-semialdehyde aminotransferase</fullName>
        <shortName evidence="1">GSA-AT</shortName>
    </alternativeName>
</protein>
<reference key="1">
    <citation type="journal article" date="2007" name="Genome Res.">
        <title>Reductive evolution and niche adaptation inferred from the genome of Mycobacterium ulcerans, the causative agent of Buruli ulcer.</title>
        <authorList>
            <person name="Stinear T.P."/>
            <person name="Seemann T."/>
            <person name="Pidot S."/>
            <person name="Frigui W."/>
            <person name="Reysset G."/>
            <person name="Garnier T."/>
            <person name="Meurice G."/>
            <person name="Simon D."/>
            <person name="Bouchier C."/>
            <person name="Ma L."/>
            <person name="Tichit M."/>
            <person name="Porter J.L."/>
            <person name="Ryan J."/>
            <person name="Johnson P.D.R."/>
            <person name="Davies J.K."/>
            <person name="Jenkin G.A."/>
            <person name="Small P.L.C."/>
            <person name="Jones L.M."/>
            <person name="Tekaia F."/>
            <person name="Laval F."/>
            <person name="Daffe M."/>
            <person name="Parkhill J."/>
            <person name="Cole S.T."/>
        </authorList>
    </citation>
    <scope>NUCLEOTIDE SEQUENCE [LARGE SCALE GENOMIC DNA]</scope>
    <source>
        <strain>Agy99</strain>
    </source>
</reference>
<gene>
    <name evidence="1" type="primary">hemL</name>
    <name type="ordered locus">MUL_0623</name>
</gene>
<sequence>MGSTDQAVTSVRRSAQLFTDACAVIPGGVNSPVRAFTAVGGTPRFITEAHGCWLTDADGNRYADLVCSWGPMILGHAHPAVVEAVSRAAANGLSFGAPTPTETELAAEMIGRVAPVERLRLVNSGTEATMSAVRLARGFTGRSKIIKFSGCYHGHVDALLADAGSGVATLGLPSSPGVTGAAAADTIVLPYNDLEAVRQTFAQHGEQIAAVITEASPGNMGVVPPGRGYNAALRAVTAEHGALLIVDEVMTGFRVSRSGWYGIDPVDADLFTFGKVMSGGLPAAAFGGRAEVMERLAPLGPVYQAGTLSGNPVAMAAGLATLRTADDGVYAALDANADRLARLLAGALTDAGVAHQIPRAGNMLSVFFSETPVTDFAAARNSQTWRFAPFFHALLDAGVYPPCSAFEAWFVSAALDDTAFERIADALPTAARAAANATPESRP</sequence>
<comment type="catalytic activity">
    <reaction evidence="1">
        <text>(S)-4-amino-5-oxopentanoate = 5-aminolevulinate</text>
        <dbReference type="Rhea" id="RHEA:14265"/>
        <dbReference type="ChEBI" id="CHEBI:57501"/>
        <dbReference type="ChEBI" id="CHEBI:356416"/>
        <dbReference type="EC" id="5.4.3.8"/>
    </reaction>
</comment>
<comment type="cofactor">
    <cofactor evidence="1">
        <name>pyridoxal 5'-phosphate</name>
        <dbReference type="ChEBI" id="CHEBI:597326"/>
    </cofactor>
</comment>
<comment type="pathway">
    <text evidence="1">Porphyrin-containing compound metabolism; protoporphyrin-IX biosynthesis; 5-aminolevulinate from L-glutamyl-tRNA(Glu): step 2/2.</text>
</comment>
<comment type="subunit">
    <text evidence="1">Homodimer.</text>
</comment>
<comment type="subcellular location">
    <subcellularLocation>
        <location evidence="1">Cytoplasm</location>
    </subcellularLocation>
</comment>
<comment type="similarity">
    <text evidence="1">Belongs to the class-III pyridoxal-phosphate-dependent aminotransferase family. HemL subfamily.</text>
</comment>
<accession>A0PLS0</accession>
<name>GSA_MYCUA</name>
<feature type="chain" id="PRO_0000300927" description="Glutamate-1-semialdehyde 2,1-aminomutase">
    <location>
        <begin position="1"/>
        <end position="443"/>
    </location>
</feature>
<feature type="modified residue" description="N6-(pyridoxal phosphate)lysine" evidence="1">
    <location>
        <position position="275"/>
    </location>
</feature>
<dbReference type="EC" id="5.4.3.8" evidence="1"/>
<dbReference type="EMBL" id="CP000325">
    <property type="protein sequence ID" value="ABL03289.1"/>
    <property type="molecule type" value="Genomic_DNA"/>
</dbReference>
<dbReference type="RefSeq" id="WP_011738914.1">
    <property type="nucleotide sequence ID" value="NC_008611.1"/>
</dbReference>
<dbReference type="SMR" id="A0PLS0"/>
<dbReference type="KEGG" id="mul:MUL_0623"/>
<dbReference type="eggNOG" id="COG0001">
    <property type="taxonomic scope" value="Bacteria"/>
</dbReference>
<dbReference type="HOGENOM" id="CLU_016922_1_5_11"/>
<dbReference type="UniPathway" id="UPA00251">
    <property type="reaction ID" value="UER00317"/>
</dbReference>
<dbReference type="Proteomes" id="UP000000765">
    <property type="component" value="Chromosome"/>
</dbReference>
<dbReference type="GO" id="GO:0005737">
    <property type="term" value="C:cytoplasm"/>
    <property type="evidence" value="ECO:0007669"/>
    <property type="project" value="UniProtKB-SubCell"/>
</dbReference>
<dbReference type="GO" id="GO:0042286">
    <property type="term" value="F:glutamate-1-semialdehyde 2,1-aminomutase activity"/>
    <property type="evidence" value="ECO:0007669"/>
    <property type="project" value="UniProtKB-UniRule"/>
</dbReference>
<dbReference type="GO" id="GO:0030170">
    <property type="term" value="F:pyridoxal phosphate binding"/>
    <property type="evidence" value="ECO:0007669"/>
    <property type="project" value="InterPro"/>
</dbReference>
<dbReference type="GO" id="GO:0008483">
    <property type="term" value="F:transaminase activity"/>
    <property type="evidence" value="ECO:0007669"/>
    <property type="project" value="InterPro"/>
</dbReference>
<dbReference type="GO" id="GO:0006782">
    <property type="term" value="P:protoporphyrinogen IX biosynthetic process"/>
    <property type="evidence" value="ECO:0007669"/>
    <property type="project" value="UniProtKB-UniRule"/>
</dbReference>
<dbReference type="CDD" id="cd00610">
    <property type="entry name" value="OAT_like"/>
    <property type="match status" value="1"/>
</dbReference>
<dbReference type="FunFam" id="3.40.640.10:FF:000021">
    <property type="entry name" value="Glutamate-1-semialdehyde 2,1-aminomutase"/>
    <property type="match status" value="1"/>
</dbReference>
<dbReference type="Gene3D" id="3.90.1150.10">
    <property type="entry name" value="Aspartate Aminotransferase, domain 1"/>
    <property type="match status" value="1"/>
</dbReference>
<dbReference type="Gene3D" id="3.40.640.10">
    <property type="entry name" value="Type I PLP-dependent aspartate aminotransferase-like (Major domain)"/>
    <property type="match status" value="1"/>
</dbReference>
<dbReference type="HAMAP" id="MF_00375">
    <property type="entry name" value="HemL_aminotrans_3"/>
    <property type="match status" value="1"/>
</dbReference>
<dbReference type="InterPro" id="IPR004639">
    <property type="entry name" value="4pyrrol_synth_GluAld_NH2Trfase"/>
</dbReference>
<dbReference type="InterPro" id="IPR005814">
    <property type="entry name" value="Aminotrans_3"/>
</dbReference>
<dbReference type="InterPro" id="IPR049704">
    <property type="entry name" value="Aminotrans_3_PPA_site"/>
</dbReference>
<dbReference type="InterPro" id="IPR015424">
    <property type="entry name" value="PyrdxlP-dep_Trfase"/>
</dbReference>
<dbReference type="InterPro" id="IPR015421">
    <property type="entry name" value="PyrdxlP-dep_Trfase_major"/>
</dbReference>
<dbReference type="InterPro" id="IPR015422">
    <property type="entry name" value="PyrdxlP-dep_Trfase_small"/>
</dbReference>
<dbReference type="NCBIfam" id="TIGR00713">
    <property type="entry name" value="hemL"/>
    <property type="match status" value="1"/>
</dbReference>
<dbReference type="NCBIfam" id="NF000818">
    <property type="entry name" value="PRK00062.1"/>
    <property type="match status" value="1"/>
</dbReference>
<dbReference type="PANTHER" id="PTHR43713">
    <property type="entry name" value="GLUTAMATE-1-SEMIALDEHYDE 2,1-AMINOMUTASE"/>
    <property type="match status" value="1"/>
</dbReference>
<dbReference type="PANTHER" id="PTHR43713:SF3">
    <property type="entry name" value="GLUTAMATE-1-SEMIALDEHYDE 2,1-AMINOMUTASE 1, CHLOROPLASTIC-RELATED"/>
    <property type="match status" value="1"/>
</dbReference>
<dbReference type="Pfam" id="PF00202">
    <property type="entry name" value="Aminotran_3"/>
    <property type="match status" value="1"/>
</dbReference>
<dbReference type="SUPFAM" id="SSF53383">
    <property type="entry name" value="PLP-dependent transferases"/>
    <property type="match status" value="1"/>
</dbReference>
<dbReference type="PROSITE" id="PS00600">
    <property type="entry name" value="AA_TRANSFER_CLASS_3"/>
    <property type="match status" value="1"/>
</dbReference>
<organism>
    <name type="scientific">Mycobacterium ulcerans (strain Agy99)</name>
    <dbReference type="NCBI Taxonomy" id="362242"/>
    <lineage>
        <taxon>Bacteria</taxon>
        <taxon>Bacillati</taxon>
        <taxon>Actinomycetota</taxon>
        <taxon>Actinomycetes</taxon>
        <taxon>Mycobacteriales</taxon>
        <taxon>Mycobacteriaceae</taxon>
        <taxon>Mycobacterium</taxon>
        <taxon>Mycobacterium ulcerans group</taxon>
    </lineage>
</organism>
<proteinExistence type="inferred from homology"/>
<evidence type="ECO:0000255" key="1">
    <source>
        <dbReference type="HAMAP-Rule" id="MF_00375"/>
    </source>
</evidence>